<accession>C1B393</accession>
<evidence type="ECO:0000255" key="1">
    <source>
        <dbReference type="HAMAP-Rule" id="MF_00197"/>
    </source>
</evidence>
<dbReference type="EC" id="5.1.1.7" evidence="1"/>
<dbReference type="EMBL" id="AP011115">
    <property type="protein sequence ID" value="BAH55010.1"/>
    <property type="molecule type" value="Genomic_DNA"/>
</dbReference>
<dbReference type="RefSeq" id="WP_015890446.1">
    <property type="nucleotide sequence ID" value="NC_012522.1"/>
</dbReference>
<dbReference type="SMR" id="C1B393"/>
<dbReference type="STRING" id="632772.ROP_67630"/>
<dbReference type="KEGG" id="rop:ROP_67630"/>
<dbReference type="PATRIC" id="fig|632772.20.peg.7050"/>
<dbReference type="HOGENOM" id="CLU_053306_4_0_11"/>
<dbReference type="OrthoDB" id="9805408at2"/>
<dbReference type="UniPathway" id="UPA00034">
    <property type="reaction ID" value="UER00025"/>
</dbReference>
<dbReference type="Proteomes" id="UP000002212">
    <property type="component" value="Chromosome"/>
</dbReference>
<dbReference type="GO" id="GO:0005829">
    <property type="term" value="C:cytosol"/>
    <property type="evidence" value="ECO:0007669"/>
    <property type="project" value="TreeGrafter"/>
</dbReference>
<dbReference type="GO" id="GO:0008837">
    <property type="term" value="F:diaminopimelate epimerase activity"/>
    <property type="evidence" value="ECO:0007669"/>
    <property type="project" value="UniProtKB-UniRule"/>
</dbReference>
<dbReference type="GO" id="GO:0009089">
    <property type="term" value="P:lysine biosynthetic process via diaminopimelate"/>
    <property type="evidence" value="ECO:0007669"/>
    <property type="project" value="UniProtKB-UniRule"/>
</dbReference>
<dbReference type="Gene3D" id="3.10.310.10">
    <property type="entry name" value="Diaminopimelate Epimerase, Chain A, domain 1"/>
    <property type="match status" value="2"/>
</dbReference>
<dbReference type="HAMAP" id="MF_00197">
    <property type="entry name" value="DAP_epimerase"/>
    <property type="match status" value="1"/>
</dbReference>
<dbReference type="InterPro" id="IPR018510">
    <property type="entry name" value="DAP_epimerase_AS"/>
</dbReference>
<dbReference type="InterPro" id="IPR001653">
    <property type="entry name" value="DAP_epimerase_DapF"/>
</dbReference>
<dbReference type="NCBIfam" id="TIGR00652">
    <property type="entry name" value="DapF"/>
    <property type="match status" value="1"/>
</dbReference>
<dbReference type="PANTHER" id="PTHR31689:SF0">
    <property type="entry name" value="DIAMINOPIMELATE EPIMERASE"/>
    <property type="match status" value="1"/>
</dbReference>
<dbReference type="PANTHER" id="PTHR31689">
    <property type="entry name" value="DIAMINOPIMELATE EPIMERASE, CHLOROPLASTIC"/>
    <property type="match status" value="1"/>
</dbReference>
<dbReference type="Pfam" id="PF01678">
    <property type="entry name" value="DAP_epimerase"/>
    <property type="match status" value="2"/>
</dbReference>
<dbReference type="SUPFAM" id="SSF54506">
    <property type="entry name" value="Diaminopimelate epimerase-like"/>
    <property type="match status" value="2"/>
</dbReference>
<dbReference type="PROSITE" id="PS01326">
    <property type="entry name" value="DAP_EPIMERASE"/>
    <property type="match status" value="1"/>
</dbReference>
<feature type="chain" id="PRO_1000124430" description="Diaminopimelate epimerase">
    <location>
        <begin position="1"/>
        <end position="289"/>
    </location>
</feature>
<feature type="active site" description="Proton donor" evidence="1">
    <location>
        <position position="87"/>
    </location>
</feature>
<feature type="active site" description="Proton acceptor" evidence="1">
    <location>
        <position position="226"/>
    </location>
</feature>
<feature type="binding site" evidence="1">
    <location>
        <position position="11"/>
    </location>
    <ligand>
        <name>substrate</name>
    </ligand>
</feature>
<feature type="binding site" evidence="1">
    <location>
        <position position="78"/>
    </location>
    <ligand>
        <name>substrate</name>
    </ligand>
</feature>
<feature type="binding site" evidence="1">
    <location>
        <begin position="88"/>
        <end position="89"/>
    </location>
    <ligand>
        <name>substrate</name>
    </ligand>
</feature>
<feature type="binding site" evidence="1">
    <location>
        <position position="163"/>
    </location>
    <ligand>
        <name>substrate</name>
    </ligand>
</feature>
<feature type="binding site" evidence="1">
    <location>
        <position position="199"/>
    </location>
    <ligand>
        <name>substrate</name>
    </ligand>
</feature>
<feature type="binding site" evidence="1">
    <location>
        <begin position="217"/>
        <end position="218"/>
    </location>
    <ligand>
        <name>substrate</name>
    </ligand>
</feature>
<feature type="binding site" evidence="1">
    <location>
        <begin position="227"/>
        <end position="228"/>
    </location>
    <ligand>
        <name>substrate</name>
    </ligand>
</feature>
<feature type="site" description="Could be important to modulate the pK values of the two catalytic cysteine residues" evidence="1">
    <location>
        <position position="165"/>
    </location>
</feature>
<feature type="site" description="Could be important to modulate the pK values of the two catalytic cysteine residues" evidence="1">
    <location>
        <position position="217"/>
    </location>
</feature>
<keyword id="KW-0028">Amino-acid biosynthesis</keyword>
<keyword id="KW-0963">Cytoplasm</keyword>
<keyword id="KW-0413">Isomerase</keyword>
<keyword id="KW-0457">Lysine biosynthesis</keyword>
<organism>
    <name type="scientific">Rhodococcus opacus (strain B4)</name>
    <dbReference type="NCBI Taxonomy" id="632772"/>
    <lineage>
        <taxon>Bacteria</taxon>
        <taxon>Bacillati</taxon>
        <taxon>Actinomycetota</taxon>
        <taxon>Actinomycetes</taxon>
        <taxon>Mycobacteriales</taxon>
        <taxon>Nocardiaceae</taxon>
        <taxon>Rhodococcus</taxon>
    </lineage>
</organism>
<sequence>MDFSKGHGTENDFVVLPDPDVRIDLSAPRVAALCDRRRGLGADGILRVAKAGALAAAGVLAELPDGTSEDDWFMDYRNADGSIAEMCGNGVRVFAHYLRSTGLETRDEFVVGSRAGGKPVIVHSADGSAGEVTVDMGVVRDLGTSAATIDGKVFNGIGIDVGNPHLACVDAHLTAASLSALDLTAAPGFDPGFFPHGVNVEILTRIDSGAVDMRVHERGVGETRSCGTGTVAAATAALRFDGADSGEVKVRIPGGQVTVALSGGRATLRGPSVLVASGNLDDSWWNGLS</sequence>
<protein>
    <recommendedName>
        <fullName evidence="1">Diaminopimelate epimerase</fullName>
        <shortName evidence="1">DAP epimerase</shortName>
        <ecNumber evidence="1">5.1.1.7</ecNumber>
    </recommendedName>
    <alternativeName>
        <fullName evidence="1">PLP-independent amino acid racemase</fullName>
    </alternativeName>
</protein>
<reference key="1">
    <citation type="submission" date="2009-03" db="EMBL/GenBank/DDBJ databases">
        <title>Comparison of the complete genome sequences of Rhodococcus erythropolis PR4 and Rhodococcus opacus B4.</title>
        <authorList>
            <person name="Takarada H."/>
            <person name="Sekine M."/>
            <person name="Hosoyama A."/>
            <person name="Yamada R."/>
            <person name="Fujisawa T."/>
            <person name="Omata S."/>
            <person name="Shimizu A."/>
            <person name="Tsukatani N."/>
            <person name="Tanikawa S."/>
            <person name="Fujita N."/>
            <person name="Harayama S."/>
        </authorList>
    </citation>
    <scope>NUCLEOTIDE SEQUENCE [LARGE SCALE GENOMIC DNA]</scope>
    <source>
        <strain>B4</strain>
    </source>
</reference>
<comment type="function">
    <text evidence="1">Catalyzes the stereoinversion of LL-2,6-diaminopimelate (L,L-DAP) to meso-diaminopimelate (meso-DAP), a precursor of L-lysine and an essential component of the bacterial peptidoglycan.</text>
</comment>
<comment type="catalytic activity">
    <reaction evidence="1">
        <text>(2S,6S)-2,6-diaminopimelate = meso-2,6-diaminopimelate</text>
        <dbReference type="Rhea" id="RHEA:15393"/>
        <dbReference type="ChEBI" id="CHEBI:57609"/>
        <dbReference type="ChEBI" id="CHEBI:57791"/>
        <dbReference type="EC" id="5.1.1.7"/>
    </reaction>
</comment>
<comment type="pathway">
    <text evidence="1">Amino-acid biosynthesis; L-lysine biosynthesis via DAP pathway; DL-2,6-diaminopimelate from LL-2,6-diaminopimelate: step 1/1.</text>
</comment>
<comment type="subunit">
    <text evidence="1">Homodimer.</text>
</comment>
<comment type="subcellular location">
    <subcellularLocation>
        <location evidence="1">Cytoplasm</location>
    </subcellularLocation>
</comment>
<comment type="similarity">
    <text evidence="1">Belongs to the diaminopimelate epimerase family.</text>
</comment>
<name>DAPF_RHOOB</name>
<gene>
    <name evidence="1" type="primary">dapF</name>
    <name type="ordered locus">ROP_67630</name>
</gene>
<proteinExistence type="inferred from homology"/>